<gene>
    <name type="primary">Cct5</name>
</gene>
<dbReference type="EC" id="3.6.1.-" evidence="1"/>
<dbReference type="EMBL" id="BC059165">
    <property type="protein sequence ID" value="AAH59165.1"/>
    <property type="status" value="ALT_SEQ"/>
    <property type="molecule type" value="mRNA"/>
</dbReference>
<dbReference type="EMBL" id="BC079441">
    <property type="protein sequence ID" value="AAH79441.1"/>
    <property type="molecule type" value="mRNA"/>
</dbReference>
<dbReference type="RefSeq" id="NP_001004078.1">
    <property type="nucleotide sequence ID" value="NM_001004078.1"/>
</dbReference>
<dbReference type="SMR" id="Q68FQ0"/>
<dbReference type="BioGRID" id="254817">
    <property type="interactions" value="5"/>
</dbReference>
<dbReference type="FunCoup" id="Q68FQ0">
    <property type="interactions" value="4169"/>
</dbReference>
<dbReference type="IntAct" id="Q68FQ0">
    <property type="interactions" value="7"/>
</dbReference>
<dbReference type="MINT" id="Q68FQ0"/>
<dbReference type="STRING" id="10116.ENSRNOP00000015886"/>
<dbReference type="GlyGen" id="Q68FQ0">
    <property type="glycosylation" value="1 site, 1 O-linked glycan (1 site)"/>
</dbReference>
<dbReference type="iPTMnet" id="Q68FQ0"/>
<dbReference type="PhosphoSitePlus" id="Q68FQ0"/>
<dbReference type="jPOST" id="Q68FQ0"/>
<dbReference type="PaxDb" id="10116-ENSRNOP00000015886"/>
<dbReference type="Ensembl" id="ENSRNOT00000015886.7">
    <property type="protein sequence ID" value="ENSRNOP00000015886.4"/>
    <property type="gene ID" value="ENSRNOG00000011632.7"/>
</dbReference>
<dbReference type="GeneID" id="294864"/>
<dbReference type="KEGG" id="rno:294864"/>
<dbReference type="UCSC" id="RGD:735161">
    <property type="organism name" value="rat"/>
</dbReference>
<dbReference type="AGR" id="RGD:735161"/>
<dbReference type="CTD" id="22948"/>
<dbReference type="RGD" id="735161">
    <property type="gene designation" value="Cct5"/>
</dbReference>
<dbReference type="eggNOG" id="KOG0357">
    <property type="taxonomic scope" value="Eukaryota"/>
</dbReference>
<dbReference type="GeneTree" id="ENSGT00550000074988"/>
<dbReference type="HOGENOM" id="CLU_008891_7_2_1"/>
<dbReference type="InParanoid" id="Q68FQ0"/>
<dbReference type="OMA" id="SHPQMPH"/>
<dbReference type="OrthoDB" id="29578at9989"/>
<dbReference type="PhylomeDB" id="Q68FQ0"/>
<dbReference type="TreeFam" id="TF105638"/>
<dbReference type="BRENDA" id="3.6.4.B10">
    <property type="organism ID" value="5301"/>
</dbReference>
<dbReference type="Reactome" id="R-RNO-390471">
    <property type="pathway name" value="Association of TriC/CCT with target proteins during biosynthesis"/>
</dbReference>
<dbReference type="Reactome" id="R-RNO-6814122">
    <property type="pathway name" value="Cooperation of PDCL (PhLP1) and TRiC/CCT in G-protein beta folding"/>
</dbReference>
<dbReference type="PRO" id="PR:Q68FQ0"/>
<dbReference type="Proteomes" id="UP000002494">
    <property type="component" value="Chromosome 2"/>
</dbReference>
<dbReference type="Bgee" id="ENSRNOG00000011632">
    <property type="expression patterns" value="Expressed in thymus and 19 other cell types or tissues"/>
</dbReference>
<dbReference type="GO" id="GO:0044297">
    <property type="term" value="C:cell body"/>
    <property type="evidence" value="ECO:0000266"/>
    <property type="project" value="RGD"/>
</dbReference>
<dbReference type="GO" id="GO:0005813">
    <property type="term" value="C:centrosome"/>
    <property type="evidence" value="ECO:0000266"/>
    <property type="project" value="RGD"/>
</dbReference>
<dbReference type="GO" id="GO:0005832">
    <property type="term" value="C:chaperonin-containing T-complex"/>
    <property type="evidence" value="ECO:0000250"/>
    <property type="project" value="UniProtKB"/>
</dbReference>
<dbReference type="GO" id="GO:0005874">
    <property type="term" value="C:microtubule"/>
    <property type="evidence" value="ECO:0000266"/>
    <property type="project" value="RGD"/>
</dbReference>
<dbReference type="GO" id="GO:0005524">
    <property type="term" value="F:ATP binding"/>
    <property type="evidence" value="ECO:0007669"/>
    <property type="project" value="UniProtKB-KW"/>
</dbReference>
<dbReference type="GO" id="GO:0016887">
    <property type="term" value="F:ATP hydrolysis activity"/>
    <property type="evidence" value="ECO:0007669"/>
    <property type="project" value="InterPro"/>
</dbReference>
<dbReference type="GO" id="GO:0140662">
    <property type="term" value="F:ATP-dependent protein folding chaperone"/>
    <property type="evidence" value="ECO:0007669"/>
    <property type="project" value="InterPro"/>
</dbReference>
<dbReference type="GO" id="GO:0048487">
    <property type="term" value="F:beta-tubulin binding"/>
    <property type="evidence" value="ECO:0000266"/>
    <property type="project" value="RGD"/>
</dbReference>
<dbReference type="GO" id="GO:0031681">
    <property type="term" value="F:G-protein beta-subunit binding"/>
    <property type="evidence" value="ECO:0000250"/>
    <property type="project" value="CAFA"/>
</dbReference>
<dbReference type="GO" id="GO:0003730">
    <property type="term" value="F:mRNA 3'-UTR binding"/>
    <property type="evidence" value="ECO:0000266"/>
    <property type="project" value="RGD"/>
</dbReference>
<dbReference type="GO" id="GO:0048027">
    <property type="term" value="F:mRNA 5'-UTR binding"/>
    <property type="evidence" value="ECO:0000266"/>
    <property type="project" value="RGD"/>
</dbReference>
<dbReference type="GO" id="GO:0044183">
    <property type="term" value="F:protein folding chaperone"/>
    <property type="evidence" value="ECO:0000266"/>
    <property type="project" value="RGD"/>
</dbReference>
<dbReference type="GO" id="GO:0051082">
    <property type="term" value="F:unfolded protein binding"/>
    <property type="evidence" value="ECO:0000318"/>
    <property type="project" value="GO_Central"/>
</dbReference>
<dbReference type="GO" id="GO:0007339">
    <property type="term" value="P:binding of sperm to zona pellucida"/>
    <property type="evidence" value="ECO:0000266"/>
    <property type="project" value="RGD"/>
</dbReference>
<dbReference type="GO" id="GO:0051086">
    <property type="term" value="P:chaperone mediated protein folding independent of cofactor"/>
    <property type="evidence" value="ECO:0000266"/>
    <property type="project" value="RGD"/>
</dbReference>
<dbReference type="GO" id="GO:0061077">
    <property type="term" value="P:chaperone-mediated protein folding"/>
    <property type="evidence" value="ECO:0000266"/>
    <property type="project" value="RGD"/>
</dbReference>
<dbReference type="GO" id="GO:0032212">
    <property type="term" value="P:positive regulation of telomere maintenance via telomerase"/>
    <property type="evidence" value="ECO:0000266"/>
    <property type="project" value="RGD"/>
</dbReference>
<dbReference type="GO" id="GO:0006457">
    <property type="term" value="P:protein folding"/>
    <property type="evidence" value="ECO:0000266"/>
    <property type="project" value="RGD"/>
</dbReference>
<dbReference type="GO" id="GO:0050821">
    <property type="term" value="P:protein stabilization"/>
    <property type="evidence" value="ECO:0000266"/>
    <property type="project" value="RGD"/>
</dbReference>
<dbReference type="GO" id="GO:0009615">
    <property type="term" value="P:response to virus"/>
    <property type="evidence" value="ECO:0000266"/>
    <property type="project" value="RGD"/>
</dbReference>
<dbReference type="CDD" id="cd03339">
    <property type="entry name" value="TCP1_epsilon"/>
    <property type="match status" value="1"/>
</dbReference>
<dbReference type="FunFam" id="1.10.560.10:FF:000053">
    <property type="entry name" value="T-complex protein 1 subunit delta"/>
    <property type="match status" value="1"/>
</dbReference>
<dbReference type="FunFam" id="3.30.260.10:FF:000028">
    <property type="entry name" value="T-complex protein 1 subunit epsilon"/>
    <property type="match status" value="1"/>
</dbReference>
<dbReference type="FunFam" id="3.50.7.10:FF:000003">
    <property type="entry name" value="T-complex protein 1 subunit epsilon"/>
    <property type="match status" value="1"/>
</dbReference>
<dbReference type="FunFam" id="1.10.560.10:FF:000049">
    <property type="entry name" value="T-complex protein 1 subunitTheta, putative"/>
    <property type="match status" value="1"/>
</dbReference>
<dbReference type="Gene3D" id="3.50.7.10">
    <property type="entry name" value="GroEL"/>
    <property type="match status" value="1"/>
</dbReference>
<dbReference type="Gene3D" id="1.10.560.10">
    <property type="entry name" value="GroEL-like equatorial domain"/>
    <property type="match status" value="1"/>
</dbReference>
<dbReference type="Gene3D" id="3.30.260.10">
    <property type="entry name" value="TCP-1-like chaperonin intermediate domain"/>
    <property type="match status" value="1"/>
</dbReference>
<dbReference type="InterPro" id="IPR012718">
    <property type="entry name" value="Chap_CCT_epsi"/>
</dbReference>
<dbReference type="InterPro" id="IPR017998">
    <property type="entry name" value="Chaperone_TCP-1"/>
</dbReference>
<dbReference type="InterPro" id="IPR002194">
    <property type="entry name" value="Chaperonin_TCP-1_CS"/>
</dbReference>
<dbReference type="InterPro" id="IPR002423">
    <property type="entry name" value="Cpn60/GroEL/TCP-1"/>
</dbReference>
<dbReference type="InterPro" id="IPR027409">
    <property type="entry name" value="GroEL-like_apical_dom_sf"/>
</dbReference>
<dbReference type="InterPro" id="IPR027413">
    <property type="entry name" value="GROEL-like_equatorial_sf"/>
</dbReference>
<dbReference type="InterPro" id="IPR027410">
    <property type="entry name" value="TCP-1-like_intermed_sf"/>
</dbReference>
<dbReference type="InterPro" id="IPR053374">
    <property type="entry name" value="TCP-1_chaperonin"/>
</dbReference>
<dbReference type="InterPro" id="IPR054827">
    <property type="entry name" value="thermosome_alpha"/>
</dbReference>
<dbReference type="NCBIfam" id="TIGR02343">
    <property type="entry name" value="chap_CCT_epsi"/>
    <property type="match status" value="1"/>
</dbReference>
<dbReference type="NCBIfam" id="NF041082">
    <property type="entry name" value="thermosome_alpha"/>
    <property type="match status" value="1"/>
</dbReference>
<dbReference type="NCBIfam" id="NF041083">
    <property type="entry name" value="thermosome_beta"/>
    <property type="match status" value="1"/>
</dbReference>
<dbReference type="PANTHER" id="PTHR11353">
    <property type="entry name" value="CHAPERONIN"/>
    <property type="match status" value="1"/>
</dbReference>
<dbReference type="Pfam" id="PF00118">
    <property type="entry name" value="Cpn60_TCP1"/>
    <property type="match status" value="1"/>
</dbReference>
<dbReference type="PRINTS" id="PR00304">
    <property type="entry name" value="TCOMPLEXTCP1"/>
</dbReference>
<dbReference type="SUPFAM" id="SSF52029">
    <property type="entry name" value="GroEL apical domain-like"/>
    <property type="match status" value="1"/>
</dbReference>
<dbReference type="SUPFAM" id="SSF48592">
    <property type="entry name" value="GroEL equatorial domain-like"/>
    <property type="match status" value="1"/>
</dbReference>
<dbReference type="SUPFAM" id="SSF54849">
    <property type="entry name" value="GroEL-intermediate domain like"/>
    <property type="match status" value="1"/>
</dbReference>
<dbReference type="PROSITE" id="PS00750">
    <property type="entry name" value="TCP1_1"/>
    <property type="match status" value="1"/>
</dbReference>
<dbReference type="PROSITE" id="PS00751">
    <property type="entry name" value="TCP1_2"/>
    <property type="match status" value="1"/>
</dbReference>
<dbReference type="PROSITE" id="PS00995">
    <property type="entry name" value="TCP1_3"/>
    <property type="match status" value="1"/>
</dbReference>
<name>TCPE_RAT</name>
<organism>
    <name type="scientific">Rattus norvegicus</name>
    <name type="common">Rat</name>
    <dbReference type="NCBI Taxonomy" id="10116"/>
    <lineage>
        <taxon>Eukaryota</taxon>
        <taxon>Metazoa</taxon>
        <taxon>Chordata</taxon>
        <taxon>Craniata</taxon>
        <taxon>Vertebrata</taxon>
        <taxon>Euteleostomi</taxon>
        <taxon>Mammalia</taxon>
        <taxon>Eutheria</taxon>
        <taxon>Euarchontoglires</taxon>
        <taxon>Glires</taxon>
        <taxon>Rodentia</taxon>
        <taxon>Myomorpha</taxon>
        <taxon>Muroidea</taxon>
        <taxon>Muridae</taxon>
        <taxon>Murinae</taxon>
        <taxon>Rattus</taxon>
    </lineage>
</organism>
<keyword id="KW-0007">Acetylation</keyword>
<keyword id="KW-0067">ATP-binding</keyword>
<keyword id="KW-0143">Chaperone</keyword>
<keyword id="KW-0963">Cytoplasm</keyword>
<keyword id="KW-0206">Cytoskeleton</keyword>
<keyword id="KW-0903">Direct protein sequencing</keyword>
<keyword id="KW-0378">Hydrolase</keyword>
<keyword id="KW-1017">Isopeptide bond</keyword>
<keyword id="KW-0460">Magnesium</keyword>
<keyword id="KW-0479">Metal-binding</keyword>
<keyword id="KW-0547">Nucleotide-binding</keyword>
<keyword id="KW-0597">Phosphoprotein</keyword>
<keyword id="KW-1185">Reference proteome</keyword>
<keyword id="KW-0832">Ubl conjugation</keyword>
<proteinExistence type="evidence at protein level"/>
<comment type="function">
    <text evidence="1">Component of the chaperonin-containing T-complex (TRiC), a molecular chaperone complex that assists the folding of actin, tubulin and other proteins upon ATP hydrolysis. The TRiC complex mediates the folding of WRAP53/TCAB1, thereby regulating telomere maintenance. As part of the TRiC complex may play a role in the assembly of BBSome, a complex involved in ciliogenesis regulating transports vesicles to the cilia.</text>
</comment>
<comment type="catalytic activity">
    <reaction evidence="1">
        <text>ATP + H2O = ADP + phosphate + H(+)</text>
        <dbReference type="Rhea" id="RHEA:13065"/>
        <dbReference type="ChEBI" id="CHEBI:15377"/>
        <dbReference type="ChEBI" id="CHEBI:15378"/>
        <dbReference type="ChEBI" id="CHEBI:30616"/>
        <dbReference type="ChEBI" id="CHEBI:43474"/>
        <dbReference type="ChEBI" id="CHEBI:456216"/>
    </reaction>
</comment>
<comment type="subunit">
    <text evidence="1 2">Component of the chaperonin-containing T-complex (TRiC), a hexadecamer composed of two identical back-to-back stacked rings enclosing a protein folding chamber. Each ring is made up of eight different subunits: TCP1/CCT1, CCT2, CCT3, CCT4, CCT5, CCT6A/CCT6, CCT7, CCT8. Interacts with PACRG (By similarity). Interacts with DNAAF4 (By similarity). Interacts with DLEC1 (By similarity). Interacts with SPMAP2 (By similarity).</text>
</comment>
<comment type="subcellular location">
    <subcellularLocation>
        <location evidence="1">Cytoplasm</location>
    </subcellularLocation>
    <subcellularLocation>
        <location evidence="1">Cytoplasm</location>
        <location evidence="1">Cytoskeleton</location>
        <location evidence="1">Microtubule organizing center</location>
        <location evidence="1">Centrosome</location>
    </subcellularLocation>
</comment>
<comment type="PTM">
    <text evidence="1">Ubiquitinated by the DCX(DCAF12) complex specifically recognizes the diglutamate (Glu-Glu) at the C-terminus, leading to its degradation.</text>
</comment>
<comment type="similarity">
    <text evidence="3">Belongs to the TCP-1 chaperonin family.</text>
</comment>
<comment type="sequence caution" evidence="3">
    <conflict type="miscellaneous discrepancy">
        <sequence resource="EMBL-CDS" id="AAH59165"/>
    </conflict>
    <text>Contaminating sequence. Potential poly-A sequence.</text>
</comment>
<reference key="1">
    <citation type="journal article" date="2004" name="Genome Res.">
        <title>The status, quality, and expansion of the NIH full-length cDNA project: the Mammalian Gene Collection (MGC).</title>
        <authorList>
            <consortium name="The MGC Project Team"/>
        </authorList>
    </citation>
    <scope>NUCLEOTIDE SEQUENCE [LARGE SCALE MRNA]</scope>
    <source>
        <tissue>Pituitary</tissue>
        <tissue>Testis</tissue>
    </source>
</reference>
<reference key="2">
    <citation type="submission" date="2007-04" db="UniProtKB">
        <authorList>
            <person name="Lubec G."/>
            <person name="Afjehi-Sadat L."/>
            <person name="Diao W."/>
        </authorList>
    </citation>
    <scope>PROTEIN SEQUENCE OF 248-261 AND 324-340</scope>
    <scope>IDENTIFICATION BY MASS SPECTROMETRY</scope>
    <source>
        <strain>Sprague-Dawley</strain>
        <tissue>Hippocampus</tissue>
        <tissue>Spinal cord</tissue>
    </source>
</reference>
<feature type="initiator methionine" description="Removed" evidence="1">
    <location>
        <position position="1"/>
    </location>
</feature>
<feature type="chain" id="PRO_0000271396" description="T-complex protein 1 subunit epsilon">
    <location>
        <begin position="2"/>
        <end position="541"/>
    </location>
</feature>
<feature type="binding site" evidence="1">
    <location>
        <position position="53"/>
    </location>
    <ligand>
        <name>ADP</name>
        <dbReference type="ChEBI" id="CHEBI:456216"/>
    </ligand>
</feature>
<feature type="binding site" evidence="1">
    <location>
        <position position="53"/>
    </location>
    <ligand>
        <name>ATP</name>
        <dbReference type="ChEBI" id="CHEBI:30616"/>
    </ligand>
</feature>
<feature type="binding site" evidence="1">
    <location>
        <position position="104"/>
    </location>
    <ligand>
        <name>Mg(2+)</name>
        <dbReference type="ChEBI" id="CHEBI:18420"/>
    </ligand>
</feature>
<feature type="binding site" evidence="1">
    <location>
        <position position="105"/>
    </location>
    <ligand>
        <name>ADP</name>
        <dbReference type="ChEBI" id="CHEBI:456216"/>
    </ligand>
</feature>
<feature type="binding site" evidence="1">
    <location>
        <position position="106"/>
    </location>
    <ligand>
        <name>ADP</name>
        <dbReference type="ChEBI" id="CHEBI:456216"/>
    </ligand>
</feature>
<feature type="binding site" evidence="1">
    <location>
        <position position="106"/>
    </location>
    <ligand>
        <name>ATP</name>
        <dbReference type="ChEBI" id="CHEBI:30616"/>
    </ligand>
</feature>
<feature type="binding site" evidence="1">
    <location>
        <position position="107"/>
    </location>
    <ligand>
        <name>ADP</name>
        <dbReference type="ChEBI" id="CHEBI:456216"/>
    </ligand>
</feature>
<feature type="binding site" evidence="1">
    <location>
        <position position="107"/>
    </location>
    <ligand>
        <name>ATP</name>
        <dbReference type="ChEBI" id="CHEBI:30616"/>
    </ligand>
</feature>
<feature type="binding site" evidence="1">
    <location>
        <position position="175"/>
    </location>
    <ligand>
        <name>ADP</name>
        <dbReference type="ChEBI" id="CHEBI:456216"/>
    </ligand>
</feature>
<feature type="binding site" evidence="1">
    <location>
        <position position="422"/>
    </location>
    <ligand>
        <name>ADP</name>
        <dbReference type="ChEBI" id="CHEBI:456216"/>
    </ligand>
</feature>
<feature type="binding site" evidence="1">
    <location>
        <position position="422"/>
    </location>
    <ligand>
        <name>ATP</name>
        <dbReference type="ChEBI" id="CHEBI:30616"/>
    </ligand>
</feature>
<feature type="binding site" evidence="1">
    <location>
        <position position="492"/>
    </location>
    <ligand>
        <name>ADP</name>
        <dbReference type="ChEBI" id="CHEBI:456216"/>
    </ligand>
</feature>
<feature type="binding site" evidence="1">
    <location>
        <position position="508"/>
    </location>
    <ligand>
        <name>ADP</name>
        <dbReference type="ChEBI" id="CHEBI:456216"/>
    </ligand>
</feature>
<feature type="binding site" evidence="1">
    <location>
        <position position="513"/>
    </location>
    <ligand>
        <name>ADP</name>
        <dbReference type="ChEBI" id="CHEBI:456216"/>
    </ligand>
</feature>
<feature type="modified residue" description="N-acetylalanine" evidence="1">
    <location>
        <position position="2"/>
    </location>
</feature>
<feature type="modified residue" description="Phosphoserine" evidence="1">
    <location>
        <position position="26"/>
    </location>
</feature>
<feature type="modified residue" description="Phosphoserine" evidence="1">
    <location>
        <position position="346"/>
    </location>
</feature>
<feature type="modified residue" description="Phosphoserine" evidence="1">
    <location>
        <position position="539"/>
    </location>
</feature>
<feature type="cross-link" description="Glycyl lysine isopeptide (Lys-Gly) (interchain with G-Cter in SUMO2)" evidence="1">
    <location>
        <position position="20"/>
    </location>
</feature>
<feature type="cross-link" description="Glycyl lysine isopeptide (Lys-Gly) (interchain with G-Cter in SUMO2)" evidence="1">
    <location>
        <position position="210"/>
    </location>
</feature>
<feature type="cross-link" description="Glycyl lysine isopeptide (Lys-Gly) (interchain with G-Cter in SUMO2)" evidence="1">
    <location>
        <position position="214"/>
    </location>
</feature>
<feature type="cross-link" description="Glycyl lysine isopeptide (Lys-Gly) (interchain with G-Cter in SUMO2)" evidence="1">
    <location>
        <position position="265"/>
    </location>
</feature>
<feature type="cross-link" description="Glycyl lysine isopeptide (Lys-Gly) (interchain with G-Cter in SUMO2)" evidence="1">
    <location>
        <position position="275"/>
    </location>
</feature>
<feature type="cross-link" description="Glycyl lysine isopeptide (Lys-Gly) (interchain with G-Cter in SUMO2)" evidence="1">
    <location>
        <position position="279"/>
    </location>
</feature>
<feature type="cross-link" description="Glycyl lysine isopeptide (Lys-Gly) (interchain with G-Cter in SUMO2)" evidence="1">
    <location>
        <position position="392"/>
    </location>
</feature>
<protein>
    <recommendedName>
        <fullName>T-complex protein 1 subunit epsilon</fullName>
        <shortName>TCP-1-epsilon</shortName>
        <ecNumber evidence="1">3.6.1.-</ecNumber>
    </recommendedName>
    <alternativeName>
        <fullName>CCT-epsilon</fullName>
    </alternativeName>
</protein>
<accession>Q68FQ0</accession>
<accession>Q6PCT4</accession>
<evidence type="ECO:0000250" key="1">
    <source>
        <dbReference type="UniProtKB" id="P48643"/>
    </source>
</evidence>
<evidence type="ECO:0000250" key="2">
    <source>
        <dbReference type="UniProtKB" id="P80316"/>
    </source>
</evidence>
<evidence type="ECO:0000305" key="3"/>
<sequence>MASVGTLAFDEYGRPFLIIKDQDRKSRLMGLEALKSHIMAAKAVANTMRTSLGPNGLDKMMVDKDGDVTVTNDGATILSMMDVDHQIAKLMVELSKSQDDEIGDGTTGVVVLAGALLEEAEQLLDRGIHPIRIADGYEQAARIAIQHLDKISDNVLVDINNPEPLIQTAKTTLGSKVVNSCHRQMAEIAVNAVLTVADMERRDVDFELIKVEGKVGGRLEDTKLIKGVIVDKDFSHPQMPKEVLNAKIAILTCPFEPPKPKTKHKLDVTSVEDYKALQKYEKEKFEEMIAQIKETGANLAICQWGFDDEANHLLLQNGLPAVRWVGGPEIELIAIATGGRIVPRFSELTSEKLGFAGVVREISFGTTKDKMLVIEQCKNSRAVTIFIRGGNKMIIEEAKRSLHDALCVIRNLIRDNRVVYGGGAAEISCALAVSQEADKCPTLEQYAMRAFADALEVIPMALSENSGMNPIQTMTEVRARQVKESNPALGIDCLHKGSNDMQYQHVIETLIGKKQQISLATQMVRMILKIDDIRKPGESEE</sequence>